<dbReference type="EC" id="4.6.1.12" evidence="1"/>
<dbReference type="EMBL" id="CP000103">
    <property type="protein sequence ID" value="ABB75419.1"/>
    <property type="molecule type" value="Genomic_DNA"/>
</dbReference>
<dbReference type="RefSeq" id="WP_011381428.1">
    <property type="nucleotide sequence ID" value="NC_007614.1"/>
</dbReference>
<dbReference type="SMR" id="Q2Y752"/>
<dbReference type="STRING" id="323848.Nmul_A2126"/>
<dbReference type="KEGG" id="nmu:Nmul_A2126"/>
<dbReference type="eggNOG" id="COG0245">
    <property type="taxonomic scope" value="Bacteria"/>
</dbReference>
<dbReference type="HOGENOM" id="CLU_084630_2_0_4"/>
<dbReference type="OrthoDB" id="9804336at2"/>
<dbReference type="UniPathway" id="UPA00056">
    <property type="reaction ID" value="UER00095"/>
</dbReference>
<dbReference type="Proteomes" id="UP000002718">
    <property type="component" value="Chromosome"/>
</dbReference>
<dbReference type="GO" id="GO:0008685">
    <property type="term" value="F:2-C-methyl-D-erythritol 2,4-cyclodiphosphate synthase activity"/>
    <property type="evidence" value="ECO:0007669"/>
    <property type="project" value="UniProtKB-UniRule"/>
</dbReference>
<dbReference type="GO" id="GO:0046872">
    <property type="term" value="F:metal ion binding"/>
    <property type="evidence" value="ECO:0007669"/>
    <property type="project" value="UniProtKB-KW"/>
</dbReference>
<dbReference type="GO" id="GO:0019288">
    <property type="term" value="P:isopentenyl diphosphate biosynthetic process, methylerythritol 4-phosphate pathway"/>
    <property type="evidence" value="ECO:0007669"/>
    <property type="project" value="UniProtKB-UniRule"/>
</dbReference>
<dbReference type="GO" id="GO:0016114">
    <property type="term" value="P:terpenoid biosynthetic process"/>
    <property type="evidence" value="ECO:0007669"/>
    <property type="project" value="InterPro"/>
</dbReference>
<dbReference type="CDD" id="cd00554">
    <property type="entry name" value="MECDP_synthase"/>
    <property type="match status" value="1"/>
</dbReference>
<dbReference type="FunFam" id="3.30.1330.50:FF:000001">
    <property type="entry name" value="2-C-methyl-D-erythritol 2,4-cyclodiphosphate synthase"/>
    <property type="match status" value="1"/>
</dbReference>
<dbReference type="Gene3D" id="3.30.1330.50">
    <property type="entry name" value="2-C-methyl-D-erythritol 2,4-cyclodiphosphate synthase"/>
    <property type="match status" value="1"/>
</dbReference>
<dbReference type="HAMAP" id="MF_00107">
    <property type="entry name" value="IspF"/>
    <property type="match status" value="1"/>
</dbReference>
<dbReference type="InterPro" id="IPR003526">
    <property type="entry name" value="MECDP_synthase"/>
</dbReference>
<dbReference type="InterPro" id="IPR020555">
    <property type="entry name" value="MECDP_synthase_CS"/>
</dbReference>
<dbReference type="InterPro" id="IPR036571">
    <property type="entry name" value="MECDP_synthase_sf"/>
</dbReference>
<dbReference type="NCBIfam" id="TIGR00151">
    <property type="entry name" value="ispF"/>
    <property type="match status" value="1"/>
</dbReference>
<dbReference type="PANTHER" id="PTHR43181">
    <property type="entry name" value="2-C-METHYL-D-ERYTHRITOL 2,4-CYCLODIPHOSPHATE SYNTHASE, CHLOROPLASTIC"/>
    <property type="match status" value="1"/>
</dbReference>
<dbReference type="PANTHER" id="PTHR43181:SF1">
    <property type="entry name" value="2-C-METHYL-D-ERYTHRITOL 2,4-CYCLODIPHOSPHATE SYNTHASE, CHLOROPLASTIC"/>
    <property type="match status" value="1"/>
</dbReference>
<dbReference type="Pfam" id="PF02542">
    <property type="entry name" value="YgbB"/>
    <property type="match status" value="1"/>
</dbReference>
<dbReference type="SUPFAM" id="SSF69765">
    <property type="entry name" value="IpsF-like"/>
    <property type="match status" value="1"/>
</dbReference>
<dbReference type="PROSITE" id="PS01350">
    <property type="entry name" value="ISPF"/>
    <property type="match status" value="1"/>
</dbReference>
<gene>
    <name evidence="1" type="primary">ispF</name>
    <name type="ordered locus">Nmul_A2126</name>
</gene>
<protein>
    <recommendedName>
        <fullName evidence="1">2-C-methyl-D-erythritol 2,4-cyclodiphosphate synthase</fullName>
        <shortName evidence="1">MECDP-synthase</shortName>
        <shortName evidence="1">MECPP-synthase</shortName>
        <shortName evidence="1">MECPS</shortName>
        <ecNumber evidence="1">4.6.1.12</ecNumber>
    </recommendedName>
</protein>
<keyword id="KW-0414">Isoprene biosynthesis</keyword>
<keyword id="KW-0456">Lyase</keyword>
<keyword id="KW-0479">Metal-binding</keyword>
<keyword id="KW-1185">Reference proteome</keyword>
<name>ISPF_NITMU</name>
<proteinExistence type="inferred from homology"/>
<accession>Q2Y752</accession>
<organism>
    <name type="scientific">Nitrosospira multiformis (strain ATCC 25196 / NCIMB 11849 / C 71)</name>
    <dbReference type="NCBI Taxonomy" id="323848"/>
    <lineage>
        <taxon>Bacteria</taxon>
        <taxon>Pseudomonadati</taxon>
        <taxon>Pseudomonadota</taxon>
        <taxon>Betaproteobacteria</taxon>
        <taxon>Nitrosomonadales</taxon>
        <taxon>Nitrosomonadaceae</taxon>
        <taxon>Nitrosospira</taxon>
    </lineage>
</organism>
<sequence length="177" mass="19079">MFFAEIKQEEVIVGGFRIGQGFDVHQLVEGRKLVIGGVTIPYEKGLLGHSDADVLLHAICDAVLGAAALGDIGRHFSDTDPRYRNIDSRVLLQNVGNLLAERGYRVVNVDATIIAQAPRMASHIPAMVANIAQDLRMQPGDVNVKAKTAERLGPVGRGEGIEAEAVCLITHMNQTTD</sequence>
<comment type="function">
    <text evidence="1">Involved in the biosynthesis of isopentenyl diphosphate (IPP) and dimethylallyl diphosphate (DMAPP), two major building blocks of isoprenoid compounds. Catalyzes the conversion of 4-diphosphocytidyl-2-C-methyl-D-erythritol 2-phosphate (CDP-ME2P) to 2-C-methyl-D-erythritol 2,4-cyclodiphosphate (ME-CPP) with a corresponding release of cytidine 5-monophosphate (CMP).</text>
</comment>
<comment type="catalytic activity">
    <reaction evidence="1">
        <text>4-CDP-2-C-methyl-D-erythritol 2-phosphate = 2-C-methyl-D-erythritol 2,4-cyclic diphosphate + CMP</text>
        <dbReference type="Rhea" id="RHEA:23864"/>
        <dbReference type="ChEBI" id="CHEBI:57919"/>
        <dbReference type="ChEBI" id="CHEBI:58483"/>
        <dbReference type="ChEBI" id="CHEBI:60377"/>
        <dbReference type="EC" id="4.6.1.12"/>
    </reaction>
</comment>
<comment type="cofactor">
    <cofactor evidence="1">
        <name>a divalent metal cation</name>
        <dbReference type="ChEBI" id="CHEBI:60240"/>
    </cofactor>
    <text evidence="1">Binds 1 divalent metal cation per subunit.</text>
</comment>
<comment type="pathway">
    <text evidence="1">Isoprenoid biosynthesis; isopentenyl diphosphate biosynthesis via DXP pathway; isopentenyl diphosphate from 1-deoxy-D-xylulose 5-phosphate: step 4/6.</text>
</comment>
<comment type="subunit">
    <text evidence="1">Homotrimer.</text>
</comment>
<comment type="similarity">
    <text evidence="1">Belongs to the IspF family.</text>
</comment>
<reference key="1">
    <citation type="submission" date="2005-08" db="EMBL/GenBank/DDBJ databases">
        <title>Complete sequence of chromosome 1 of Nitrosospira multiformis ATCC 25196.</title>
        <authorList>
            <person name="Copeland A."/>
            <person name="Lucas S."/>
            <person name="Lapidus A."/>
            <person name="Barry K."/>
            <person name="Detter J.C."/>
            <person name="Glavina T."/>
            <person name="Hammon N."/>
            <person name="Israni S."/>
            <person name="Pitluck S."/>
            <person name="Chain P."/>
            <person name="Malfatti S."/>
            <person name="Shin M."/>
            <person name="Vergez L."/>
            <person name="Schmutz J."/>
            <person name="Larimer F."/>
            <person name="Land M."/>
            <person name="Hauser L."/>
            <person name="Kyrpides N."/>
            <person name="Lykidis A."/>
            <person name="Richardson P."/>
        </authorList>
    </citation>
    <scope>NUCLEOTIDE SEQUENCE [LARGE SCALE GENOMIC DNA]</scope>
    <source>
        <strain>ATCC 25196 / NCIMB 11849 / C 71</strain>
    </source>
</reference>
<evidence type="ECO:0000255" key="1">
    <source>
        <dbReference type="HAMAP-Rule" id="MF_00107"/>
    </source>
</evidence>
<feature type="chain" id="PRO_0000237737" description="2-C-methyl-D-erythritol 2,4-cyclodiphosphate synthase">
    <location>
        <begin position="1"/>
        <end position="177"/>
    </location>
</feature>
<feature type="binding site" evidence="1">
    <location>
        <begin position="23"/>
        <end position="25"/>
    </location>
    <ligand>
        <name>4-CDP-2-C-methyl-D-erythritol 2-phosphate</name>
        <dbReference type="ChEBI" id="CHEBI:57919"/>
    </ligand>
</feature>
<feature type="binding site" evidence="1">
    <location>
        <position position="23"/>
    </location>
    <ligand>
        <name>a divalent metal cation</name>
        <dbReference type="ChEBI" id="CHEBI:60240"/>
    </ligand>
</feature>
<feature type="binding site" evidence="1">
    <location>
        <position position="25"/>
    </location>
    <ligand>
        <name>a divalent metal cation</name>
        <dbReference type="ChEBI" id="CHEBI:60240"/>
    </ligand>
</feature>
<feature type="binding site" evidence="1">
    <location>
        <begin position="49"/>
        <end position="50"/>
    </location>
    <ligand>
        <name>4-CDP-2-C-methyl-D-erythritol 2-phosphate</name>
        <dbReference type="ChEBI" id="CHEBI:57919"/>
    </ligand>
</feature>
<feature type="binding site" evidence="1">
    <location>
        <position position="57"/>
    </location>
    <ligand>
        <name>a divalent metal cation</name>
        <dbReference type="ChEBI" id="CHEBI:60240"/>
    </ligand>
</feature>
<feature type="binding site" evidence="1">
    <location>
        <begin position="71"/>
        <end position="73"/>
    </location>
    <ligand>
        <name>4-CDP-2-C-methyl-D-erythritol 2-phosphate</name>
        <dbReference type="ChEBI" id="CHEBI:57919"/>
    </ligand>
</feature>
<feature type="binding site" evidence="1">
    <location>
        <begin position="76"/>
        <end position="80"/>
    </location>
    <ligand>
        <name>4-CDP-2-C-methyl-D-erythritol 2-phosphate</name>
        <dbReference type="ChEBI" id="CHEBI:57919"/>
    </ligand>
</feature>
<feature type="binding site" evidence="1">
    <location>
        <begin position="115"/>
        <end position="121"/>
    </location>
    <ligand>
        <name>4-CDP-2-C-methyl-D-erythritol 2-phosphate</name>
        <dbReference type="ChEBI" id="CHEBI:57919"/>
    </ligand>
</feature>
<feature type="binding site" evidence="1">
    <location>
        <position position="157"/>
    </location>
    <ligand>
        <name>4-CDP-2-C-methyl-D-erythritol 2-phosphate</name>
        <dbReference type="ChEBI" id="CHEBI:57919"/>
    </ligand>
</feature>
<feature type="site" description="Transition state stabilizer" evidence="1">
    <location>
        <position position="49"/>
    </location>
</feature>
<feature type="site" description="Transition state stabilizer" evidence="1">
    <location>
        <position position="148"/>
    </location>
</feature>